<comment type="domain">
    <text evidence="1">Requires a bound zinc ion for normal folding and solubility.</text>
</comment>
<comment type="similarity">
    <text evidence="2">Belongs to the UPF0587 family.</text>
</comment>
<organism>
    <name type="scientific">Drosophila melanogaster</name>
    <name type="common">Fruit fly</name>
    <dbReference type="NCBI Taxonomy" id="7227"/>
    <lineage>
        <taxon>Eukaryota</taxon>
        <taxon>Metazoa</taxon>
        <taxon>Ecdysozoa</taxon>
        <taxon>Arthropoda</taxon>
        <taxon>Hexapoda</taxon>
        <taxon>Insecta</taxon>
        <taxon>Pterygota</taxon>
        <taxon>Neoptera</taxon>
        <taxon>Endopterygota</taxon>
        <taxon>Diptera</taxon>
        <taxon>Brachycera</taxon>
        <taxon>Muscomorpha</taxon>
        <taxon>Ephydroidea</taxon>
        <taxon>Drosophilidae</taxon>
        <taxon>Drosophila</taxon>
        <taxon>Sophophora</taxon>
    </lineage>
</organism>
<proteinExistence type="evidence at transcript level"/>
<accession>A1Z9A2</accession>
<accession>Q8MRY1</accession>
<dbReference type="EMBL" id="AE013599">
    <property type="protein sequence ID" value="AAF58406.2"/>
    <property type="molecule type" value="Genomic_DNA"/>
</dbReference>
<dbReference type="EMBL" id="AY119205">
    <property type="protein sequence ID" value="AAM51065.1"/>
    <property type="molecule type" value="mRNA"/>
</dbReference>
<dbReference type="RefSeq" id="NP_001286382.1">
    <property type="nucleotide sequence ID" value="NM_001299453.1"/>
</dbReference>
<dbReference type="RefSeq" id="NP_610848.1">
    <property type="nucleotide sequence ID" value="NM_137004.4"/>
</dbReference>
<dbReference type="SMR" id="A1Z9A2"/>
<dbReference type="BioGRID" id="62222">
    <property type="interactions" value="2"/>
</dbReference>
<dbReference type="FunCoup" id="A1Z9A2">
    <property type="interactions" value="1125"/>
</dbReference>
<dbReference type="IntAct" id="A1Z9A2">
    <property type="interactions" value="1"/>
</dbReference>
<dbReference type="STRING" id="7227.FBpp0311588"/>
<dbReference type="PaxDb" id="7227-FBpp0086877"/>
<dbReference type="EnsemblMetazoa" id="FBtr0087764">
    <property type="protein sequence ID" value="FBpp0086877"/>
    <property type="gene ID" value="FBgn0033810"/>
</dbReference>
<dbReference type="EnsemblMetazoa" id="FBtr0345470">
    <property type="protein sequence ID" value="FBpp0311588"/>
    <property type="gene ID" value="FBgn0033810"/>
</dbReference>
<dbReference type="GeneID" id="36459"/>
<dbReference type="KEGG" id="dme:Dmel_CG4646"/>
<dbReference type="UCSC" id="CG4646-RA">
    <property type="organism name" value="d. melanogaster"/>
</dbReference>
<dbReference type="AGR" id="FB:FBgn0033810"/>
<dbReference type="FlyBase" id="FBgn0033810">
    <property type="gene designation" value="CG4646"/>
</dbReference>
<dbReference type="VEuPathDB" id="VectorBase:FBgn0033810"/>
<dbReference type="eggNOG" id="KOG1296">
    <property type="taxonomic scope" value="Eukaryota"/>
</dbReference>
<dbReference type="GeneTree" id="ENSGT00390000001523"/>
<dbReference type="HOGENOM" id="CLU_114688_1_0_1"/>
<dbReference type="InParanoid" id="A1Z9A2"/>
<dbReference type="OMA" id="TAHFVWR"/>
<dbReference type="OrthoDB" id="10248838at2759"/>
<dbReference type="PhylomeDB" id="A1Z9A2"/>
<dbReference type="BioGRID-ORCS" id="36459">
    <property type="hits" value="0 hits in 1 CRISPR screen"/>
</dbReference>
<dbReference type="GenomeRNAi" id="36459"/>
<dbReference type="PRO" id="PR:A1Z9A2"/>
<dbReference type="Proteomes" id="UP000000803">
    <property type="component" value="Chromosome 2R"/>
</dbReference>
<dbReference type="Bgee" id="FBgn0033810">
    <property type="expression patterns" value="Expressed in spermatocyte in testis and 90 other cell types or tissues"/>
</dbReference>
<dbReference type="ExpressionAtlas" id="A1Z9A2">
    <property type="expression patterns" value="baseline and differential"/>
</dbReference>
<dbReference type="GO" id="GO:0008270">
    <property type="term" value="F:zinc ion binding"/>
    <property type="evidence" value="ECO:0000250"/>
    <property type="project" value="UniProtKB"/>
</dbReference>
<dbReference type="InterPro" id="IPR008584">
    <property type="entry name" value="CXXC_Zn-binding_euk"/>
</dbReference>
<dbReference type="PANTHER" id="PTHR12857">
    <property type="entry name" value="CXXC MOTIF CONTAINING ZINC BINDING PROTEIN"/>
    <property type="match status" value="1"/>
</dbReference>
<dbReference type="PANTHER" id="PTHR12857:SF0">
    <property type="entry name" value="CXXC MOTIF CONTAINING ZINC BINDING PROTEIN"/>
    <property type="match status" value="1"/>
</dbReference>
<dbReference type="Pfam" id="PF05907">
    <property type="entry name" value="CXXC_Zn-b_euk"/>
    <property type="match status" value="1"/>
</dbReference>
<dbReference type="SUPFAM" id="SSF141678">
    <property type="entry name" value="MAL13P1.257-like"/>
    <property type="match status" value="1"/>
</dbReference>
<evidence type="ECO:0000250" key="1">
    <source>
        <dbReference type="UniProtKB" id="Q9NWV4"/>
    </source>
</evidence>
<evidence type="ECO:0000305" key="2"/>
<protein>
    <recommendedName>
        <fullName>UPF0587 protein CG4646</fullName>
    </recommendedName>
</protein>
<sequence length="163" mass="18606">MVRVGLQISATLENVDKLETSHPDYSFFLKLKCSNCGEQSDKWHDITESERVQQDSRNAAGFNFFMKCKMCSRENSIDIVDKSNAPYTADDSGAFKTIVVFECRGAEPVEFSPRVGWRVSSAENGQQFEEVDLSEDDWVEYDQKNNNSVGIYEFASKFIKLKK</sequence>
<reference key="1">
    <citation type="journal article" date="2000" name="Science">
        <title>The genome sequence of Drosophila melanogaster.</title>
        <authorList>
            <person name="Adams M.D."/>
            <person name="Celniker S.E."/>
            <person name="Holt R.A."/>
            <person name="Evans C.A."/>
            <person name="Gocayne J.D."/>
            <person name="Amanatides P.G."/>
            <person name="Scherer S.E."/>
            <person name="Li P.W."/>
            <person name="Hoskins R.A."/>
            <person name="Galle R.F."/>
            <person name="George R.A."/>
            <person name="Lewis S.E."/>
            <person name="Richards S."/>
            <person name="Ashburner M."/>
            <person name="Henderson S.N."/>
            <person name="Sutton G.G."/>
            <person name="Wortman J.R."/>
            <person name="Yandell M.D."/>
            <person name="Zhang Q."/>
            <person name="Chen L.X."/>
            <person name="Brandon R.C."/>
            <person name="Rogers Y.-H.C."/>
            <person name="Blazej R.G."/>
            <person name="Champe M."/>
            <person name="Pfeiffer B.D."/>
            <person name="Wan K.H."/>
            <person name="Doyle C."/>
            <person name="Baxter E.G."/>
            <person name="Helt G."/>
            <person name="Nelson C.R."/>
            <person name="Miklos G.L.G."/>
            <person name="Abril J.F."/>
            <person name="Agbayani A."/>
            <person name="An H.-J."/>
            <person name="Andrews-Pfannkoch C."/>
            <person name="Baldwin D."/>
            <person name="Ballew R.M."/>
            <person name="Basu A."/>
            <person name="Baxendale J."/>
            <person name="Bayraktaroglu L."/>
            <person name="Beasley E.M."/>
            <person name="Beeson K.Y."/>
            <person name="Benos P.V."/>
            <person name="Berman B.P."/>
            <person name="Bhandari D."/>
            <person name="Bolshakov S."/>
            <person name="Borkova D."/>
            <person name="Botchan M.R."/>
            <person name="Bouck J."/>
            <person name="Brokstein P."/>
            <person name="Brottier P."/>
            <person name="Burtis K.C."/>
            <person name="Busam D.A."/>
            <person name="Butler H."/>
            <person name="Cadieu E."/>
            <person name="Center A."/>
            <person name="Chandra I."/>
            <person name="Cherry J.M."/>
            <person name="Cawley S."/>
            <person name="Dahlke C."/>
            <person name="Davenport L.B."/>
            <person name="Davies P."/>
            <person name="de Pablos B."/>
            <person name="Delcher A."/>
            <person name="Deng Z."/>
            <person name="Mays A.D."/>
            <person name="Dew I."/>
            <person name="Dietz S.M."/>
            <person name="Dodson K."/>
            <person name="Doup L.E."/>
            <person name="Downes M."/>
            <person name="Dugan-Rocha S."/>
            <person name="Dunkov B.C."/>
            <person name="Dunn P."/>
            <person name="Durbin K.J."/>
            <person name="Evangelista C.C."/>
            <person name="Ferraz C."/>
            <person name="Ferriera S."/>
            <person name="Fleischmann W."/>
            <person name="Fosler C."/>
            <person name="Gabrielian A.E."/>
            <person name="Garg N.S."/>
            <person name="Gelbart W.M."/>
            <person name="Glasser K."/>
            <person name="Glodek A."/>
            <person name="Gong F."/>
            <person name="Gorrell J.H."/>
            <person name="Gu Z."/>
            <person name="Guan P."/>
            <person name="Harris M."/>
            <person name="Harris N.L."/>
            <person name="Harvey D.A."/>
            <person name="Heiman T.J."/>
            <person name="Hernandez J.R."/>
            <person name="Houck J."/>
            <person name="Hostin D."/>
            <person name="Houston K.A."/>
            <person name="Howland T.J."/>
            <person name="Wei M.-H."/>
            <person name="Ibegwam C."/>
            <person name="Jalali M."/>
            <person name="Kalush F."/>
            <person name="Karpen G.H."/>
            <person name="Ke Z."/>
            <person name="Kennison J.A."/>
            <person name="Ketchum K.A."/>
            <person name="Kimmel B.E."/>
            <person name="Kodira C.D."/>
            <person name="Kraft C.L."/>
            <person name="Kravitz S."/>
            <person name="Kulp D."/>
            <person name="Lai Z."/>
            <person name="Lasko P."/>
            <person name="Lei Y."/>
            <person name="Levitsky A.A."/>
            <person name="Li J.H."/>
            <person name="Li Z."/>
            <person name="Liang Y."/>
            <person name="Lin X."/>
            <person name="Liu X."/>
            <person name="Mattei B."/>
            <person name="McIntosh T.C."/>
            <person name="McLeod M.P."/>
            <person name="McPherson D."/>
            <person name="Merkulov G."/>
            <person name="Milshina N.V."/>
            <person name="Mobarry C."/>
            <person name="Morris J."/>
            <person name="Moshrefi A."/>
            <person name="Mount S.M."/>
            <person name="Moy M."/>
            <person name="Murphy B."/>
            <person name="Murphy L."/>
            <person name="Muzny D.M."/>
            <person name="Nelson D.L."/>
            <person name="Nelson D.R."/>
            <person name="Nelson K.A."/>
            <person name="Nixon K."/>
            <person name="Nusskern D.R."/>
            <person name="Pacleb J.M."/>
            <person name="Palazzolo M."/>
            <person name="Pittman G.S."/>
            <person name="Pan S."/>
            <person name="Pollard J."/>
            <person name="Puri V."/>
            <person name="Reese M.G."/>
            <person name="Reinert K."/>
            <person name="Remington K."/>
            <person name="Saunders R.D.C."/>
            <person name="Scheeler F."/>
            <person name="Shen H."/>
            <person name="Shue B.C."/>
            <person name="Siden-Kiamos I."/>
            <person name="Simpson M."/>
            <person name="Skupski M.P."/>
            <person name="Smith T.J."/>
            <person name="Spier E."/>
            <person name="Spradling A.C."/>
            <person name="Stapleton M."/>
            <person name="Strong R."/>
            <person name="Sun E."/>
            <person name="Svirskas R."/>
            <person name="Tector C."/>
            <person name="Turner R."/>
            <person name="Venter E."/>
            <person name="Wang A.H."/>
            <person name="Wang X."/>
            <person name="Wang Z.-Y."/>
            <person name="Wassarman D.A."/>
            <person name="Weinstock G.M."/>
            <person name="Weissenbach J."/>
            <person name="Williams S.M."/>
            <person name="Woodage T."/>
            <person name="Worley K.C."/>
            <person name="Wu D."/>
            <person name="Yang S."/>
            <person name="Yao Q.A."/>
            <person name="Ye J."/>
            <person name="Yeh R.-F."/>
            <person name="Zaveri J.S."/>
            <person name="Zhan M."/>
            <person name="Zhang G."/>
            <person name="Zhao Q."/>
            <person name="Zheng L."/>
            <person name="Zheng X.H."/>
            <person name="Zhong F.N."/>
            <person name="Zhong W."/>
            <person name="Zhou X."/>
            <person name="Zhu S.C."/>
            <person name="Zhu X."/>
            <person name="Smith H.O."/>
            <person name="Gibbs R.A."/>
            <person name="Myers E.W."/>
            <person name="Rubin G.M."/>
            <person name="Venter J.C."/>
        </authorList>
    </citation>
    <scope>NUCLEOTIDE SEQUENCE [LARGE SCALE GENOMIC DNA]</scope>
    <source>
        <strain>Berkeley</strain>
    </source>
</reference>
<reference key="2">
    <citation type="journal article" date="2002" name="Genome Biol.">
        <title>Annotation of the Drosophila melanogaster euchromatic genome: a systematic review.</title>
        <authorList>
            <person name="Misra S."/>
            <person name="Crosby M.A."/>
            <person name="Mungall C.J."/>
            <person name="Matthews B.B."/>
            <person name="Campbell K.S."/>
            <person name="Hradecky P."/>
            <person name="Huang Y."/>
            <person name="Kaminker J.S."/>
            <person name="Millburn G.H."/>
            <person name="Prochnik S.E."/>
            <person name="Smith C.D."/>
            <person name="Tupy J.L."/>
            <person name="Whitfield E.J."/>
            <person name="Bayraktaroglu L."/>
            <person name="Berman B.P."/>
            <person name="Bettencourt B.R."/>
            <person name="Celniker S.E."/>
            <person name="de Grey A.D.N.J."/>
            <person name="Drysdale R.A."/>
            <person name="Harris N.L."/>
            <person name="Richter J."/>
            <person name="Russo S."/>
            <person name="Schroeder A.J."/>
            <person name="Shu S.Q."/>
            <person name="Stapleton M."/>
            <person name="Yamada C."/>
            <person name="Ashburner M."/>
            <person name="Gelbart W.M."/>
            <person name="Rubin G.M."/>
            <person name="Lewis S.E."/>
        </authorList>
    </citation>
    <scope>GENOME REANNOTATION</scope>
    <source>
        <strain>Berkeley</strain>
    </source>
</reference>
<reference key="3">
    <citation type="journal article" date="2002" name="Genome Biol.">
        <title>A Drosophila full-length cDNA resource.</title>
        <authorList>
            <person name="Stapleton M."/>
            <person name="Carlson J.W."/>
            <person name="Brokstein P."/>
            <person name="Yu C."/>
            <person name="Champe M."/>
            <person name="George R.A."/>
            <person name="Guarin H."/>
            <person name="Kronmiller B."/>
            <person name="Pacleb J.M."/>
            <person name="Park S."/>
            <person name="Wan K.H."/>
            <person name="Rubin G.M."/>
            <person name="Celniker S.E."/>
        </authorList>
    </citation>
    <scope>NUCLEOTIDE SEQUENCE [LARGE SCALE MRNA]</scope>
    <source>
        <strain>Berkeley</strain>
        <tissue>Embryo</tissue>
    </source>
</reference>
<feature type="chain" id="PRO_0000337875" description="UPF0587 protein CG4646">
    <location>
        <begin position="1"/>
        <end position="163"/>
    </location>
</feature>
<feature type="binding site" evidence="1">
    <location>
        <position position="33"/>
    </location>
    <ligand>
        <name>Zn(2+)</name>
        <dbReference type="ChEBI" id="CHEBI:29105"/>
    </ligand>
</feature>
<feature type="binding site" evidence="1">
    <location>
        <position position="36"/>
    </location>
    <ligand>
        <name>Zn(2+)</name>
        <dbReference type="ChEBI" id="CHEBI:29105"/>
    </ligand>
</feature>
<feature type="binding site" evidence="1">
    <location>
        <position position="68"/>
    </location>
    <ligand>
        <name>Zn(2+)</name>
        <dbReference type="ChEBI" id="CHEBI:29105"/>
    </ligand>
</feature>
<feature type="binding site" evidence="1">
    <location>
        <position position="71"/>
    </location>
    <ligand>
        <name>Zn(2+)</name>
        <dbReference type="ChEBI" id="CHEBI:29105"/>
    </ligand>
</feature>
<feature type="sequence conflict" description="In Ref. 3; AAM51065." evidence="2" ref="3">
    <original>T</original>
    <variation>M</variation>
    <location>
        <position position="88"/>
    </location>
</feature>
<feature type="sequence conflict" description="In Ref. 3; AAM51065." evidence="2" ref="3">
    <original>E</original>
    <variation>D</variation>
    <location>
        <position position="129"/>
    </location>
</feature>
<feature type="sequence conflict" description="In Ref. 3; AAM51065." evidence="2" ref="3">
    <original>D</original>
    <variation>V</variation>
    <location>
        <position position="136"/>
    </location>
</feature>
<name>U587_DROME</name>
<keyword id="KW-0479">Metal-binding</keyword>
<keyword id="KW-1185">Reference proteome</keyword>
<keyword id="KW-0862">Zinc</keyword>
<gene>
    <name type="ORF">CG4646</name>
</gene>